<reference key="1">
    <citation type="journal article" date="2011" name="J. Bacteriol.">
        <title>Complete genome sequence of the plant growth-promoting endophyte Burkholderia phytofirmans strain PsJN.</title>
        <authorList>
            <person name="Weilharter A."/>
            <person name="Mitter B."/>
            <person name="Shin M.V."/>
            <person name="Chain P.S."/>
            <person name="Nowak J."/>
            <person name="Sessitsch A."/>
        </authorList>
    </citation>
    <scope>NUCLEOTIDE SEQUENCE [LARGE SCALE GENOMIC DNA]</scope>
    <source>
        <strain>DSM 17436 / LMG 22146 / PsJN</strain>
    </source>
</reference>
<protein>
    <recommendedName>
        <fullName evidence="1">Glutamate-1-semialdehyde 2,1-aminomutase</fullName>
        <shortName evidence="1">GSA</shortName>
        <ecNumber evidence="1">5.4.3.8</ecNumber>
    </recommendedName>
    <alternativeName>
        <fullName evidence="1">Glutamate-1-semialdehyde aminotransferase</fullName>
        <shortName evidence="1">GSA-AT</shortName>
    </alternativeName>
</protein>
<gene>
    <name evidence="1" type="primary">hemL</name>
    <name type="ordered locus">Bphyt_3098</name>
</gene>
<evidence type="ECO:0000255" key="1">
    <source>
        <dbReference type="HAMAP-Rule" id="MF_00375"/>
    </source>
</evidence>
<dbReference type="EC" id="5.4.3.8" evidence="1"/>
<dbReference type="EMBL" id="CP001052">
    <property type="protein sequence ID" value="ACD17490.1"/>
    <property type="molecule type" value="Genomic_DNA"/>
</dbReference>
<dbReference type="RefSeq" id="WP_012434065.1">
    <property type="nucleotide sequence ID" value="NC_010681.1"/>
</dbReference>
<dbReference type="SMR" id="B2T6C2"/>
<dbReference type="STRING" id="398527.Bphyt_3098"/>
<dbReference type="KEGG" id="bpy:Bphyt_3098"/>
<dbReference type="eggNOG" id="COG0001">
    <property type="taxonomic scope" value="Bacteria"/>
</dbReference>
<dbReference type="HOGENOM" id="CLU_016922_1_5_4"/>
<dbReference type="OrthoDB" id="3398487at2"/>
<dbReference type="UniPathway" id="UPA00251">
    <property type="reaction ID" value="UER00317"/>
</dbReference>
<dbReference type="Proteomes" id="UP000001739">
    <property type="component" value="Chromosome 1"/>
</dbReference>
<dbReference type="GO" id="GO:0005737">
    <property type="term" value="C:cytoplasm"/>
    <property type="evidence" value="ECO:0007669"/>
    <property type="project" value="UniProtKB-SubCell"/>
</dbReference>
<dbReference type="GO" id="GO:0042286">
    <property type="term" value="F:glutamate-1-semialdehyde 2,1-aminomutase activity"/>
    <property type="evidence" value="ECO:0007669"/>
    <property type="project" value="UniProtKB-UniRule"/>
</dbReference>
<dbReference type="GO" id="GO:0030170">
    <property type="term" value="F:pyridoxal phosphate binding"/>
    <property type="evidence" value="ECO:0007669"/>
    <property type="project" value="InterPro"/>
</dbReference>
<dbReference type="GO" id="GO:0008483">
    <property type="term" value="F:transaminase activity"/>
    <property type="evidence" value="ECO:0007669"/>
    <property type="project" value="InterPro"/>
</dbReference>
<dbReference type="GO" id="GO:0006782">
    <property type="term" value="P:protoporphyrinogen IX biosynthetic process"/>
    <property type="evidence" value="ECO:0007669"/>
    <property type="project" value="UniProtKB-UniRule"/>
</dbReference>
<dbReference type="CDD" id="cd00610">
    <property type="entry name" value="OAT_like"/>
    <property type="match status" value="1"/>
</dbReference>
<dbReference type="FunFam" id="3.40.640.10:FF:000021">
    <property type="entry name" value="Glutamate-1-semialdehyde 2,1-aminomutase"/>
    <property type="match status" value="1"/>
</dbReference>
<dbReference type="Gene3D" id="3.90.1150.10">
    <property type="entry name" value="Aspartate Aminotransferase, domain 1"/>
    <property type="match status" value="1"/>
</dbReference>
<dbReference type="Gene3D" id="3.40.640.10">
    <property type="entry name" value="Type I PLP-dependent aspartate aminotransferase-like (Major domain)"/>
    <property type="match status" value="1"/>
</dbReference>
<dbReference type="HAMAP" id="MF_00375">
    <property type="entry name" value="HemL_aminotrans_3"/>
    <property type="match status" value="1"/>
</dbReference>
<dbReference type="InterPro" id="IPR004639">
    <property type="entry name" value="4pyrrol_synth_GluAld_NH2Trfase"/>
</dbReference>
<dbReference type="InterPro" id="IPR005814">
    <property type="entry name" value="Aminotrans_3"/>
</dbReference>
<dbReference type="InterPro" id="IPR049704">
    <property type="entry name" value="Aminotrans_3_PPA_site"/>
</dbReference>
<dbReference type="InterPro" id="IPR015424">
    <property type="entry name" value="PyrdxlP-dep_Trfase"/>
</dbReference>
<dbReference type="InterPro" id="IPR015421">
    <property type="entry name" value="PyrdxlP-dep_Trfase_major"/>
</dbReference>
<dbReference type="InterPro" id="IPR015422">
    <property type="entry name" value="PyrdxlP-dep_Trfase_small"/>
</dbReference>
<dbReference type="NCBIfam" id="TIGR00713">
    <property type="entry name" value="hemL"/>
    <property type="match status" value="1"/>
</dbReference>
<dbReference type="NCBIfam" id="NF000818">
    <property type="entry name" value="PRK00062.1"/>
    <property type="match status" value="1"/>
</dbReference>
<dbReference type="PANTHER" id="PTHR43713">
    <property type="entry name" value="GLUTAMATE-1-SEMIALDEHYDE 2,1-AMINOMUTASE"/>
    <property type="match status" value="1"/>
</dbReference>
<dbReference type="PANTHER" id="PTHR43713:SF3">
    <property type="entry name" value="GLUTAMATE-1-SEMIALDEHYDE 2,1-AMINOMUTASE 1, CHLOROPLASTIC-RELATED"/>
    <property type="match status" value="1"/>
</dbReference>
<dbReference type="Pfam" id="PF00202">
    <property type="entry name" value="Aminotran_3"/>
    <property type="match status" value="1"/>
</dbReference>
<dbReference type="SUPFAM" id="SSF53383">
    <property type="entry name" value="PLP-dependent transferases"/>
    <property type="match status" value="1"/>
</dbReference>
<dbReference type="PROSITE" id="PS00600">
    <property type="entry name" value="AA_TRANSFER_CLASS_3"/>
    <property type="match status" value="1"/>
</dbReference>
<accession>B2T6C2</accession>
<comment type="catalytic activity">
    <reaction evidence="1">
        <text>(S)-4-amino-5-oxopentanoate = 5-aminolevulinate</text>
        <dbReference type="Rhea" id="RHEA:14265"/>
        <dbReference type="ChEBI" id="CHEBI:57501"/>
        <dbReference type="ChEBI" id="CHEBI:356416"/>
        <dbReference type="EC" id="5.4.3.8"/>
    </reaction>
</comment>
<comment type="cofactor">
    <cofactor evidence="1">
        <name>pyridoxal 5'-phosphate</name>
        <dbReference type="ChEBI" id="CHEBI:597326"/>
    </cofactor>
</comment>
<comment type="pathway">
    <text evidence="1">Porphyrin-containing compound metabolism; protoporphyrin-IX biosynthesis; 5-aminolevulinate from L-glutamyl-tRNA(Glu): step 2/2.</text>
</comment>
<comment type="subunit">
    <text evidence="1">Homodimer.</text>
</comment>
<comment type="subcellular location">
    <subcellularLocation>
        <location evidence="1">Cytoplasm</location>
    </subcellularLocation>
</comment>
<comment type="similarity">
    <text evidence="1">Belongs to the class-III pyridoxal-phosphate-dependent aminotransferase family. HemL subfamily.</text>
</comment>
<keyword id="KW-0963">Cytoplasm</keyword>
<keyword id="KW-0413">Isomerase</keyword>
<keyword id="KW-0627">Porphyrin biosynthesis</keyword>
<keyword id="KW-0663">Pyridoxal phosphate</keyword>
<proteinExistence type="inferred from homology"/>
<feature type="chain" id="PRO_1000121863" description="Glutamate-1-semialdehyde 2,1-aminomutase">
    <location>
        <begin position="1"/>
        <end position="427"/>
    </location>
</feature>
<feature type="modified residue" description="N6-(pyridoxal phosphate)lysine" evidence="1">
    <location>
        <position position="265"/>
    </location>
</feature>
<sequence>MSRNETLFERAQRTIPGGVNSPVRAFRSVGGTPRFIERAQGPYFWDADGQRYIDYIGSWGPMILGHVHPEVLEAVQRVLGNGFSFGAPTESEVEIAEEICKLVPSIEQVRMVSSGTEATMSALRLARGFTNRSRIVKFEGCYHGHADSLLVKAGSGLLTFGNPTSAGVPADIAKHTTVLEYNNVAELEEAFKAFGNEIASVIVEPVAGNMNLVRATPEFLQALRRLCTEHGSVLIFDEVMCGFRVALGGAQEVYGITPDLTCLGKVIGGGMPAAAFGGRRDIMAHLAPLGGVYQAGTLSGNPIAVAAGLKTLQLIQAPGFYDTLATRTARLVQGLANVAREAKVPFAADSLGGMFGLYFTDSIPTSFAEVTKSDVPRFNAFFHKMLDAGVYFAPSAYEAGFVSIVHDDAIVDATIDAARGAFASLAA</sequence>
<name>GSA_PARPJ</name>
<organism>
    <name type="scientific">Paraburkholderia phytofirmans (strain DSM 17436 / LMG 22146 / PsJN)</name>
    <name type="common">Burkholderia phytofirmans</name>
    <dbReference type="NCBI Taxonomy" id="398527"/>
    <lineage>
        <taxon>Bacteria</taxon>
        <taxon>Pseudomonadati</taxon>
        <taxon>Pseudomonadota</taxon>
        <taxon>Betaproteobacteria</taxon>
        <taxon>Burkholderiales</taxon>
        <taxon>Burkholderiaceae</taxon>
        <taxon>Paraburkholderia</taxon>
    </lineage>
</organism>